<gene>
    <name type="primary">VPS10</name>
    <name type="ORF">BDBG_00123</name>
</gene>
<name>VPS10_BLAGS</name>
<protein>
    <recommendedName>
        <fullName>Vacuolar protein sorting/targeting protein 10</fullName>
    </recommendedName>
    <alternativeName>
        <fullName>Carboxypeptidase Y receptor</fullName>
        <shortName>CPY receptor</shortName>
    </alternativeName>
    <alternativeName>
        <fullName>Sortilin VPS10</fullName>
    </alternativeName>
    <alternativeName>
        <fullName>Vacuolar carboxypeptidase sorting receptor VPS10</fullName>
    </alternativeName>
</protein>
<evidence type="ECO:0000250" key="1"/>
<evidence type="ECO:0000255" key="2"/>
<evidence type="ECO:0000256" key="3">
    <source>
        <dbReference type="SAM" id="MobiDB-lite"/>
    </source>
</evidence>
<evidence type="ECO:0000305" key="4"/>
<sequence>MILRRLLLAAGSLLLASAFTSAKKADGPKITVTKFKHEPVNLFYFDDSDVVMLQDGNNGDVYVSRNAGTKWDIVDVGEMKGQAWSLMPHPMDRTKAYVLGKGGKHWVTNDQAMTWREFTVDAELSPYQLPLVFHGKDSNRVMLQGIKCSGRDCVERTYYTTDGFQTLHLLMEKGRHCAWAVSTPMFGDGLDLPKEVNDRIFCVVSGLHSQWPEDNRLLYSDRFFKDDSGIEAGLDSGRAVSGVIRTASAKRHLLAATKSRRTNELALFVTDDASGWHRAEFDGQRIEEDAYTILESTNYSLQVDVVSTDSSAMGTLFTSNSNGTYFTRNIEHTNRNRQGLVDFEKIATIQGIILVNTVKNWEDVEKSSVVEKKIVSRISFDDGRTFQPLKAGKQDLHLHSVTDATNYGRVFSSPAPGLVMGVGNTGGHLKDYSDGDLYISDDAGINWKKALSDAHKYEFGDQGSVIVAVYDEGRTNKISYSFNHGKSWEKASLPLPDDVKIRAKILTTMPDSTSLKFVLVGSAKADSDVEHYVIAIDFAEMEERTCVDPDFEKWPARLNEKQEPDCLMGHKQFYRRRKADANCFIKKKFEDPIPNFEPCKCTEEDFECDFNFIRSEDGKSCVPARSLLAPEGACKNPDDKYTGSSGFRLIPGDACIKKGGLELDKPIERVCSDTMKTPAAGEIAVEKTFFTADNYRDYFYLERTGSSRGDDETVIMITSEQEIFISRDHGKRWKRIFEAETITRIEPHRYFNDVAYFLTNSGEGWYTLDRGENFRKFKAPLPPNQDKLPALSFHPDRRDWLIWTGAEECNGSGGQCHSVAYYTTNRGAEWHFLMRYVRRCEFIKRDARGSSDKIVFCEQYEDENPSSKHLQLISSEDWFAEKKVHYNNILDFATMQEFIIVAIRGEKPQDSLSVGVSIDGKTFADAELPANVKIPIQRAYTVLESRTHAAFLHVTVNNLEDHEYGSLIKSNSNGTSYVLSLSAVNRNSRGYADFEKMQGLEGVAMANVVANVDDVEKGAAKKYRTMITHNDGAEWTLLAPPGKDSEGRAYGCSTKGGKPTKACALHLHSYTERVDPRDTYSSPGAVGIMIGTGNVGEYLTPKSSADTFITRDAGISWEEAKKGKYQWEYGDSGSIIVLVPESTPTKTLLYSLDEGRSWKEYQFSEVEMQIRDISTVPSDTSRNFLLWGNEVGQGKKPGLATVNIDFSGLKERSKQCVLNEEKPEADDYYLWEPKHPLQPNGCLFGHRAKYHRKRPEKDCYNGREIQHLDSIGDICECTRSDYECDYNYEPQTDGTCARVPGLEPLDPKLVCTEDPKAIEWYEPTGYRRIPLTKCQGGKQLNHIIAHPCPNKEEEFEKKHPRLRGIGLFFAIVIPIGLAAAVGYYVYQHWDGKFGRIRLGETGSGGFFDRDSPLISIPVTIVAGIVAVATALPLLVSSLWRSLGGYIRVPGSGSSRQPYSSRGAFAARRGDYVGVVDDEDELLGTDDLEDDEEGEERNGQV</sequence>
<dbReference type="EMBL" id="GG657448">
    <property type="protein sequence ID" value="OAT03396.1"/>
    <property type="molecule type" value="Genomic_DNA"/>
</dbReference>
<dbReference type="RefSeq" id="XP_002628877.1">
    <property type="nucleotide sequence ID" value="XM_002628831.1"/>
</dbReference>
<dbReference type="SMR" id="C5JC96"/>
<dbReference type="STRING" id="559298.C5JC96"/>
<dbReference type="GlyCosmos" id="C5JC96">
    <property type="glycosylation" value="4 sites, No reported glycans"/>
</dbReference>
<dbReference type="GeneID" id="8507980"/>
<dbReference type="KEGG" id="bgh:BDBG_00123"/>
<dbReference type="VEuPathDB" id="FungiDB:BDBG_00123"/>
<dbReference type="HOGENOM" id="CLU_000700_0_0_1"/>
<dbReference type="OrthoDB" id="443634at2759"/>
<dbReference type="Proteomes" id="UP000002038">
    <property type="component" value="Unassembled WGS sequence"/>
</dbReference>
<dbReference type="GO" id="GO:0005829">
    <property type="term" value="C:cytosol"/>
    <property type="evidence" value="ECO:0007669"/>
    <property type="project" value="GOC"/>
</dbReference>
<dbReference type="GO" id="GO:0005794">
    <property type="term" value="C:Golgi apparatus"/>
    <property type="evidence" value="ECO:0007669"/>
    <property type="project" value="UniProtKB-SubCell"/>
</dbReference>
<dbReference type="GO" id="GO:0016020">
    <property type="term" value="C:membrane"/>
    <property type="evidence" value="ECO:0007669"/>
    <property type="project" value="UniProtKB-KW"/>
</dbReference>
<dbReference type="GO" id="GO:0006895">
    <property type="term" value="P:Golgi to endosome transport"/>
    <property type="evidence" value="ECO:0007669"/>
    <property type="project" value="TreeGrafter"/>
</dbReference>
<dbReference type="GO" id="GO:0006896">
    <property type="term" value="P:Golgi to vacuole transport"/>
    <property type="evidence" value="ECO:0007669"/>
    <property type="project" value="TreeGrafter"/>
</dbReference>
<dbReference type="GO" id="GO:0006623">
    <property type="term" value="P:protein targeting to vacuole"/>
    <property type="evidence" value="ECO:0007669"/>
    <property type="project" value="TreeGrafter"/>
</dbReference>
<dbReference type="CDD" id="cd15482">
    <property type="entry name" value="Sialidase_non-viral"/>
    <property type="match status" value="1"/>
</dbReference>
<dbReference type="FunFam" id="3.30.60.270:FF:000005">
    <property type="entry name" value="Sortilin"/>
    <property type="match status" value="2"/>
</dbReference>
<dbReference type="FunFam" id="2.10.70.80:FF:000001">
    <property type="entry name" value="Sortilin-related VPS10 domain-containing receptor 1"/>
    <property type="match status" value="1"/>
</dbReference>
<dbReference type="Gene3D" id="2.10.70.80">
    <property type="match status" value="2"/>
</dbReference>
<dbReference type="Gene3D" id="3.30.60.270">
    <property type="match status" value="2"/>
</dbReference>
<dbReference type="Gene3D" id="2.130.10.10">
    <property type="entry name" value="YVTN repeat-like/Quinoprotein amine dehydrogenase"/>
    <property type="match status" value="1"/>
</dbReference>
<dbReference type="InterPro" id="IPR036278">
    <property type="entry name" value="Sialidase_sf"/>
</dbReference>
<dbReference type="InterPro" id="IPR031777">
    <property type="entry name" value="Sortilin_C"/>
</dbReference>
<dbReference type="InterPro" id="IPR031778">
    <property type="entry name" value="Sortilin_N"/>
</dbReference>
<dbReference type="InterPro" id="IPR006581">
    <property type="entry name" value="VPS10"/>
</dbReference>
<dbReference type="InterPro" id="IPR050310">
    <property type="entry name" value="VPS10-sortilin"/>
</dbReference>
<dbReference type="InterPro" id="IPR015943">
    <property type="entry name" value="WD40/YVTN_repeat-like_dom_sf"/>
</dbReference>
<dbReference type="PANTHER" id="PTHR12106">
    <property type="entry name" value="SORTILIN RELATED"/>
    <property type="match status" value="1"/>
</dbReference>
<dbReference type="PANTHER" id="PTHR12106:SF27">
    <property type="entry name" value="SORTILIN-RELATED RECEPTOR"/>
    <property type="match status" value="1"/>
</dbReference>
<dbReference type="Pfam" id="PF15902">
    <property type="entry name" value="Sortilin-Vps10"/>
    <property type="match status" value="2"/>
</dbReference>
<dbReference type="Pfam" id="PF15901">
    <property type="entry name" value="Sortilin_C"/>
    <property type="match status" value="2"/>
</dbReference>
<dbReference type="SMART" id="SM00602">
    <property type="entry name" value="VPS10"/>
    <property type="match status" value="2"/>
</dbReference>
<dbReference type="SUPFAM" id="SSF110296">
    <property type="entry name" value="Oligoxyloglucan reducing end-specific cellobiohydrolase"/>
    <property type="match status" value="2"/>
</dbReference>
<dbReference type="SUPFAM" id="SSF50939">
    <property type="entry name" value="Sialidases"/>
    <property type="match status" value="1"/>
</dbReference>
<reference key="1">
    <citation type="journal article" date="2015" name="PLoS Genet.">
        <title>The dynamic genome and transcriptome of the human fungal pathogen Blastomyces and close relative Emmonsia.</title>
        <authorList>
            <person name="Munoz J.F."/>
            <person name="Gauthier G.M."/>
            <person name="Desjardins C.A."/>
            <person name="Gallo J.E."/>
            <person name="Holder J."/>
            <person name="Sullivan T.D."/>
            <person name="Marty A.J."/>
            <person name="Carmen J.C."/>
            <person name="Chen Z."/>
            <person name="Ding L."/>
            <person name="Gujja S."/>
            <person name="Magrini V."/>
            <person name="Misas E."/>
            <person name="Mitreva M."/>
            <person name="Priest M."/>
            <person name="Saif S."/>
            <person name="Whiston E.A."/>
            <person name="Young S."/>
            <person name="Zeng Q."/>
            <person name="Goldman W.E."/>
            <person name="Mardis E.R."/>
            <person name="Taylor J.W."/>
            <person name="McEwen J.G."/>
            <person name="Clay O.K."/>
            <person name="Klein B.S."/>
            <person name="Cuomo C.A."/>
        </authorList>
    </citation>
    <scope>NUCLEOTIDE SEQUENCE [LARGE SCALE GENOMIC DNA]</scope>
    <source>
        <strain>SLH14081</strain>
    </source>
</reference>
<accession>C5JC96</accession>
<accession>A0A179U5W1</accession>
<feature type="signal peptide" evidence="2">
    <location>
        <begin position="1"/>
        <end position="22"/>
    </location>
</feature>
<feature type="chain" id="PRO_0000407498" description="Vacuolar protein sorting/targeting protein 10">
    <location>
        <begin position="23"/>
        <end position="1500"/>
    </location>
</feature>
<feature type="topological domain" description="Lumenal" evidence="2">
    <location>
        <begin position="23"/>
        <end position="1364"/>
    </location>
</feature>
<feature type="transmembrane region" description="Helical" evidence="2">
    <location>
        <begin position="1365"/>
        <end position="1385"/>
    </location>
</feature>
<feature type="topological domain" description="Cytoplasmic" evidence="2">
    <location>
        <begin position="1386"/>
        <end position="1412"/>
    </location>
</feature>
<feature type="transmembrane region" description="Helical" evidence="2">
    <location>
        <begin position="1413"/>
        <end position="1433"/>
    </location>
</feature>
<feature type="topological domain" description="Lumenal" evidence="2">
    <location>
        <begin position="1434"/>
        <end position="1500"/>
    </location>
</feature>
<feature type="repeat" description="BNR 1">
    <location>
        <begin position="378"/>
        <end position="387"/>
    </location>
</feature>
<feature type="repeat" description="BNR 2">
    <location>
        <begin position="438"/>
        <end position="449"/>
    </location>
</feature>
<feature type="repeat" description="BNR 3">
    <location>
        <begin position="480"/>
        <end position="490"/>
    </location>
</feature>
<feature type="repeat" description="BNR 4">
    <location>
        <begin position="724"/>
        <end position="734"/>
    </location>
</feature>
<feature type="repeat" description="BNR 5">
    <location>
        <begin position="821"/>
        <end position="831"/>
    </location>
</feature>
<feature type="repeat" description="BNR 6">
    <location>
        <begin position="1108"/>
        <end position="1118"/>
    </location>
</feature>
<feature type="repeat" description="BNR 7">
    <location>
        <begin position="1150"/>
        <end position="1159"/>
    </location>
</feature>
<feature type="region of interest" description="Disordered" evidence="3">
    <location>
        <begin position="1481"/>
        <end position="1500"/>
    </location>
</feature>
<feature type="compositionally biased region" description="Acidic residues" evidence="3">
    <location>
        <begin position="1481"/>
        <end position="1494"/>
    </location>
</feature>
<feature type="glycosylation site" description="N-linked (GlcNAc...) asparagine" evidence="2">
    <location>
        <position position="298"/>
    </location>
</feature>
<feature type="glycosylation site" description="N-linked (GlcNAc...) asparagine" evidence="2">
    <location>
        <position position="322"/>
    </location>
</feature>
<feature type="glycosylation site" description="N-linked (GlcNAc...) asparagine" evidence="2">
    <location>
        <position position="810"/>
    </location>
</feature>
<feature type="glycosylation site" description="N-linked (GlcNAc...) asparagine" evidence="2">
    <location>
        <position position="973"/>
    </location>
</feature>
<proteinExistence type="inferred from homology"/>
<comment type="function">
    <text evidence="1">Functions as a sorting receptor in the Golgi compartment required for the intracellular sorting and delivery of soluble vacuolar proteins, like carboxypeptidase Y (CPY) and proteinase A. Executes multiple rounds of sorting by cycling between the late Golgi and a prevacuolar endosome-like compartment (By similarity).</text>
</comment>
<comment type="subcellular location">
    <subcellularLocation>
        <location evidence="1">Golgi apparatus</location>
        <location evidence="1">trans-Golgi network membrane</location>
        <topology evidence="1">Multi-pass membrane protein</topology>
    </subcellularLocation>
    <subcellularLocation>
        <location evidence="1">Prevacuolar compartment membrane</location>
        <topology evidence="1">Multi-pass membrane protein</topology>
    </subcellularLocation>
    <text evidence="1">Cycles between the Golgi apparatus and the prevacuolar compartment.</text>
</comment>
<comment type="similarity">
    <text evidence="4">Belongs to the VPS10-related sortilin family.</text>
</comment>
<organism>
    <name type="scientific">Blastomyces gilchristii (strain SLH14081)</name>
    <name type="common">Blastomyces dermatitidis</name>
    <dbReference type="NCBI Taxonomy" id="559298"/>
    <lineage>
        <taxon>Eukaryota</taxon>
        <taxon>Fungi</taxon>
        <taxon>Dikarya</taxon>
        <taxon>Ascomycota</taxon>
        <taxon>Pezizomycotina</taxon>
        <taxon>Eurotiomycetes</taxon>
        <taxon>Eurotiomycetidae</taxon>
        <taxon>Onygenales</taxon>
        <taxon>Ajellomycetaceae</taxon>
        <taxon>Blastomyces</taxon>
    </lineage>
</organism>
<keyword id="KW-0325">Glycoprotein</keyword>
<keyword id="KW-0333">Golgi apparatus</keyword>
<keyword id="KW-0472">Membrane</keyword>
<keyword id="KW-0653">Protein transport</keyword>
<keyword id="KW-0675">Receptor</keyword>
<keyword id="KW-1185">Reference proteome</keyword>
<keyword id="KW-0677">Repeat</keyword>
<keyword id="KW-0732">Signal</keyword>
<keyword id="KW-0812">Transmembrane</keyword>
<keyword id="KW-1133">Transmembrane helix</keyword>
<keyword id="KW-0813">Transport</keyword>